<evidence type="ECO:0000256" key="1">
    <source>
        <dbReference type="SAM" id="MobiDB-lite"/>
    </source>
</evidence>
<evidence type="ECO:0000269" key="2">
    <source>
    </source>
</evidence>
<evidence type="ECO:0000269" key="3">
    <source>
    </source>
</evidence>
<evidence type="ECO:0000303" key="4">
    <source>
    </source>
</evidence>
<evidence type="ECO:0000303" key="5">
    <source>
    </source>
</evidence>
<evidence type="ECO:0000305" key="6"/>
<evidence type="ECO:0000312" key="7">
    <source>
        <dbReference type="Araport" id="AT3G01015"/>
    </source>
</evidence>
<evidence type="ECO:0000312" key="8">
    <source>
        <dbReference type="EMBL" id="AAG51320.1"/>
    </source>
</evidence>
<dbReference type="EMBL" id="AC067753">
    <property type="protein sequence ID" value="AAG51320.1"/>
    <property type="molecule type" value="Genomic_DNA"/>
</dbReference>
<dbReference type="EMBL" id="CP002686">
    <property type="protein sequence ID" value="AEE73594.1"/>
    <property type="molecule type" value="Genomic_DNA"/>
</dbReference>
<dbReference type="EMBL" id="AY735598">
    <property type="protein sequence ID" value="AAU44468.1"/>
    <property type="molecule type" value="mRNA"/>
</dbReference>
<dbReference type="EMBL" id="DQ056582">
    <property type="protein sequence ID" value="AAY78731.1"/>
    <property type="molecule type" value="mRNA"/>
</dbReference>
<dbReference type="RefSeq" id="NP_186749.2">
    <property type="nucleotide sequence ID" value="NM_110965.4"/>
</dbReference>
<dbReference type="SMR" id="Q5XVC4"/>
<dbReference type="FunCoup" id="Q5XVC4">
    <property type="interactions" value="123"/>
</dbReference>
<dbReference type="STRING" id="3702.Q5XVC4"/>
<dbReference type="iPTMnet" id="Q5XVC4"/>
<dbReference type="PaxDb" id="3702-AT3G01015.1"/>
<dbReference type="ProteomicsDB" id="175096"/>
<dbReference type="EnsemblPlants" id="AT3G01015.1">
    <property type="protein sequence ID" value="AT3G01015.1"/>
    <property type="gene ID" value="AT3G01015"/>
</dbReference>
<dbReference type="GeneID" id="821318"/>
<dbReference type="Gramene" id="AT3G01015.1">
    <property type="protein sequence ID" value="AT3G01015.1"/>
    <property type="gene ID" value="AT3G01015"/>
</dbReference>
<dbReference type="KEGG" id="ath:AT3G01015"/>
<dbReference type="Araport" id="AT3G01015"/>
<dbReference type="TAIR" id="AT3G01015">
    <property type="gene designation" value="MD60"/>
</dbReference>
<dbReference type="eggNOG" id="ENOG502QWA1">
    <property type="taxonomic scope" value="Eukaryota"/>
</dbReference>
<dbReference type="HOGENOM" id="CLU_042597_0_0_1"/>
<dbReference type="InParanoid" id="Q5XVC4"/>
<dbReference type="OMA" id="YIEQYKM"/>
<dbReference type="OrthoDB" id="7677582at2759"/>
<dbReference type="PhylomeDB" id="Q5XVC4"/>
<dbReference type="PRO" id="PR:Q5XVC4"/>
<dbReference type="Proteomes" id="UP000006548">
    <property type="component" value="Chromosome 3"/>
</dbReference>
<dbReference type="ExpressionAtlas" id="Q5XVC4">
    <property type="expression patterns" value="baseline and differential"/>
</dbReference>
<dbReference type="GO" id="GO:0005737">
    <property type="term" value="C:cytoplasm"/>
    <property type="evidence" value="ECO:0007669"/>
    <property type="project" value="UniProtKB-KW"/>
</dbReference>
<dbReference type="GO" id="GO:0005874">
    <property type="term" value="C:microtubule"/>
    <property type="evidence" value="ECO:0007669"/>
    <property type="project" value="UniProtKB-KW"/>
</dbReference>
<dbReference type="GO" id="GO:0005819">
    <property type="term" value="C:spindle"/>
    <property type="evidence" value="ECO:0007669"/>
    <property type="project" value="InterPro"/>
</dbReference>
<dbReference type="GO" id="GO:0008017">
    <property type="term" value="F:microtubule binding"/>
    <property type="evidence" value="ECO:0000314"/>
    <property type="project" value="UniProtKB"/>
</dbReference>
<dbReference type="GO" id="GO:0043622">
    <property type="term" value="P:cortical microtubule organization"/>
    <property type="evidence" value="ECO:0000314"/>
    <property type="project" value="UniProtKB"/>
</dbReference>
<dbReference type="GO" id="GO:0007019">
    <property type="term" value="P:microtubule depolymerization"/>
    <property type="evidence" value="ECO:0000315"/>
    <property type="project" value="TAIR"/>
</dbReference>
<dbReference type="GO" id="GO:0060236">
    <property type="term" value="P:regulation of mitotic spindle organization"/>
    <property type="evidence" value="ECO:0007669"/>
    <property type="project" value="InterPro"/>
</dbReference>
<dbReference type="GO" id="GO:1905421">
    <property type="term" value="P:regulation of plant organ morphogenesis"/>
    <property type="evidence" value="ECO:0000315"/>
    <property type="project" value="UniProtKB"/>
</dbReference>
<dbReference type="GO" id="GO:0009723">
    <property type="term" value="P:response to ethylene"/>
    <property type="evidence" value="ECO:0000270"/>
    <property type="project" value="UniProtKB"/>
</dbReference>
<dbReference type="GO" id="GO:0009416">
    <property type="term" value="P:response to light stimulus"/>
    <property type="evidence" value="ECO:0000270"/>
    <property type="project" value="UniProtKB"/>
</dbReference>
<dbReference type="GO" id="GO:1990785">
    <property type="term" value="P:response to water-immersion restraint stress"/>
    <property type="evidence" value="ECO:0000315"/>
    <property type="project" value="UniProtKB"/>
</dbReference>
<dbReference type="GO" id="GO:0009826">
    <property type="term" value="P:unidimensional cell growth"/>
    <property type="evidence" value="ECO:0000315"/>
    <property type="project" value="UniProtKB"/>
</dbReference>
<dbReference type="InterPro" id="IPR027329">
    <property type="entry name" value="TPX2_C"/>
</dbReference>
<dbReference type="InterPro" id="IPR009675">
    <property type="entry name" value="TPX2_fam"/>
</dbReference>
<dbReference type="PANTHER" id="PTHR14326:SF54">
    <property type="entry name" value="MICROTUBULE-DESTABILIZING PROTEIN 60"/>
    <property type="match status" value="1"/>
</dbReference>
<dbReference type="PANTHER" id="PTHR14326">
    <property type="entry name" value="TARGETING PROTEIN FOR XKLP2"/>
    <property type="match status" value="1"/>
</dbReference>
<dbReference type="Pfam" id="PF06886">
    <property type="entry name" value="TPX2"/>
    <property type="match status" value="1"/>
</dbReference>
<proteinExistence type="evidence at transcript level"/>
<organism>
    <name type="scientific">Arabidopsis thaliana</name>
    <name type="common">Mouse-ear cress</name>
    <dbReference type="NCBI Taxonomy" id="3702"/>
    <lineage>
        <taxon>Eukaryota</taxon>
        <taxon>Viridiplantae</taxon>
        <taxon>Streptophyta</taxon>
        <taxon>Embryophyta</taxon>
        <taxon>Tracheophyta</taxon>
        <taxon>Spermatophyta</taxon>
        <taxon>Magnoliopsida</taxon>
        <taxon>eudicotyledons</taxon>
        <taxon>Gunneridae</taxon>
        <taxon>Pentapetalae</taxon>
        <taxon>rosids</taxon>
        <taxon>malvids</taxon>
        <taxon>Brassicales</taxon>
        <taxon>Brassicaceae</taxon>
        <taxon>Camelineae</taxon>
        <taxon>Arabidopsis</taxon>
    </lineage>
</organism>
<name>MDP60_ARATH</name>
<protein>
    <recommendedName>
        <fullName evidence="4 5">Microtubule-destabilizing protein 60</fullName>
    </recommendedName>
</protein>
<feature type="chain" id="PRO_0000454771" description="Microtubule-destabilizing protein 60">
    <location>
        <begin position="1"/>
        <end position="488"/>
    </location>
</feature>
<feature type="region of interest" description="Disordered" evidence="1">
    <location>
        <begin position="25"/>
        <end position="71"/>
    </location>
</feature>
<feature type="region of interest" description="Disordered" evidence="1">
    <location>
        <begin position="262"/>
        <end position="304"/>
    </location>
</feature>
<feature type="region of interest" description="Disordered" evidence="1">
    <location>
        <begin position="436"/>
        <end position="457"/>
    </location>
</feature>
<feature type="compositionally biased region" description="Polar residues" evidence="1">
    <location>
        <begin position="25"/>
        <end position="56"/>
    </location>
</feature>
<feature type="compositionally biased region" description="Low complexity" evidence="1">
    <location>
        <begin position="264"/>
        <end position="280"/>
    </location>
</feature>
<feature type="sequence conflict" description="In Ref. 1; AAG51320." evidence="6" ref="1">
    <original>T</original>
    <variation>A</variation>
    <location>
        <position position="13"/>
    </location>
</feature>
<feature type="sequence conflict" description="In Ref. 1; AAG51320." evidence="6" ref="1">
    <original>S</original>
    <variation>P</variation>
    <location>
        <position position="49"/>
    </location>
</feature>
<gene>
    <name evidence="4 5" type="primary">MDP60</name>
    <name evidence="7" type="ordered locus">At3g01015</name>
    <name evidence="8" type="ORF">EL3N.1</name>
</gene>
<reference key="1">
    <citation type="journal article" date="2000" name="Nature">
        <title>Sequence and analysis of chromosome 3 of the plant Arabidopsis thaliana.</title>
        <authorList>
            <person name="Salanoubat M."/>
            <person name="Lemcke K."/>
            <person name="Rieger M."/>
            <person name="Ansorge W."/>
            <person name="Unseld M."/>
            <person name="Fartmann B."/>
            <person name="Valle G."/>
            <person name="Bloecker H."/>
            <person name="Perez-Alonso M."/>
            <person name="Obermaier B."/>
            <person name="Delseny M."/>
            <person name="Boutry M."/>
            <person name="Grivell L.A."/>
            <person name="Mache R."/>
            <person name="Puigdomenech P."/>
            <person name="De Simone V."/>
            <person name="Choisne N."/>
            <person name="Artiguenave F."/>
            <person name="Robert C."/>
            <person name="Brottier P."/>
            <person name="Wincker P."/>
            <person name="Cattolico L."/>
            <person name="Weissenbach J."/>
            <person name="Saurin W."/>
            <person name="Quetier F."/>
            <person name="Schaefer M."/>
            <person name="Mueller-Auer S."/>
            <person name="Gabel C."/>
            <person name="Fuchs M."/>
            <person name="Benes V."/>
            <person name="Wurmbach E."/>
            <person name="Drzonek H."/>
            <person name="Erfle H."/>
            <person name="Jordan N."/>
            <person name="Bangert S."/>
            <person name="Wiedelmann R."/>
            <person name="Kranz H."/>
            <person name="Voss H."/>
            <person name="Holland R."/>
            <person name="Brandt P."/>
            <person name="Nyakatura G."/>
            <person name="Vezzi A."/>
            <person name="D'Angelo M."/>
            <person name="Pallavicini A."/>
            <person name="Toppo S."/>
            <person name="Simionati B."/>
            <person name="Conrad A."/>
            <person name="Hornischer K."/>
            <person name="Kauer G."/>
            <person name="Loehnert T.-H."/>
            <person name="Nordsiek G."/>
            <person name="Reichelt J."/>
            <person name="Scharfe M."/>
            <person name="Schoen O."/>
            <person name="Bargues M."/>
            <person name="Terol J."/>
            <person name="Climent J."/>
            <person name="Navarro P."/>
            <person name="Collado C."/>
            <person name="Perez-Perez A."/>
            <person name="Ottenwaelder B."/>
            <person name="Duchemin D."/>
            <person name="Cooke R."/>
            <person name="Laudie M."/>
            <person name="Berger-Llauro C."/>
            <person name="Purnelle B."/>
            <person name="Masuy D."/>
            <person name="de Haan M."/>
            <person name="Maarse A.C."/>
            <person name="Alcaraz J.-P."/>
            <person name="Cottet A."/>
            <person name="Casacuberta E."/>
            <person name="Monfort A."/>
            <person name="Argiriou A."/>
            <person name="Flores M."/>
            <person name="Liguori R."/>
            <person name="Vitale D."/>
            <person name="Mannhaupt G."/>
            <person name="Haase D."/>
            <person name="Schoof H."/>
            <person name="Rudd S."/>
            <person name="Zaccaria P."/>
            <person name="Mewes H.-W."/>
            <person name="Mayer K.F.X."/>
            <person name="Kaul S."/>
            <person name="Town C.D."/>
            <person name="Koo H.L."/>
            <person name="Tallon L.J."/>
            <person name="Jenkins J."/>
            <person name="Rooney T."/>
            <person name="Rizzo M."/>
            <person name="Walts A."/>
            <person name="Utterback T."/>
            <person name="Fujii C.Y."/>
            <person name="Shea T.P."/>
            <person name="Creasy T.H."/>
            <person name="Haas B."/>
            <person name="Maiti R."/>
            <person name="Wu D."/>
            <person name="Peterson J."/>
            <person name="Van Aken S."/>
            <person name="Pai G."/>
            <person name="Militscher J."/>
            <person name="Sellers P."/>
            <person name="Gill J.E."/>
            <person name="Feldblyum T.V."/>
            <person name="Preuss D."/>
            <person name="Lin X."/>
            <person name="Nierman W.C."/>
            <person name="Salzberg S.L."/>
            <person name="White O."/>
            <person name="Venter J.C."/>
            <person name="Fraser C.M."/>
            <person name="Kaneko T."/>
            <person name="Nakamura Y."/>
            <person name="Sato S."/>
            <person name="Kato T."/>
            <person name="Asamizu E."/>
            <person name="Sasamoto S."/>
            <person name="Kimura T."/>
            <person name="Idesawa K."/>
            <person name="Kawashima K."/>
            <person name="Kishida Y."/>
            <person name="Kiyokawa C."/>
            <person name="Kohara M."/>
            <person name="Matsumoto M."/>
            <person name="Matsuno A."/>
            <person name="Muraki A."/>
            <person name="Nakayama S."/>
            <person name="Nakazaki N."/>
            <person name="Shinpo S."/>
            <person name="Takeuchi C."/>
            <person name="Wada T."/>
            <person name="Watanabe A."/>
            <person name="Yamada M."/>
            <person name="Yasuda M."/>
            <person name="Tabata S."/>
        </authorList>
    </citation>
    <scope>NUCLEOTIDE SEQUENCE [LARGE SCALE GENOMIC DNA]</scope>
    <source>
        <strain>cv. Columbia</strain>
    </source>
</reference>
<reference key="2">
    <citation type="journal article" date="2017" name="Plant J.">
        <title>Araport11: a complete reannotation of the Arabidopsis thaliana reference genome.</title>
        <authorList>
            <person name="Cheng C.Y."/>
            <person name="Krishnakumar V."/>
            <person name="Chan A.P."/>
            <person name="Thibaud-Nissen F."/>
            <person name="Schobel S."/>
            <person name="Town C.D."/>
        </authorList>
    </citation>
    <scope>GENOME REANNOTATION</scope>
    <source>
        <strain>cv. Columbia</strain>
    </source>
</reference>
<reference key="3">
    <citation type="journal article" date="2005" name="Plant Physiol.">
        <title>Analysis of the cDNAs of hypothetical genes on Arabidopsis chromosome 2 reveals numerous transcript variants.</title>
        <authorList>
            <person name="Xiao Y.-L."/>
            <person name="Smith S.R."/>
            <person name="Ishmael N."/>
            <person name="Redman J.C."/>
            <person name="Kumar N."/>
            <person name="Monaghan E.L."/>
            <person name="Ayele M."/>
            <person name="Haas B.J."/>
            <person name="Wu H.C."/>
            <person name="Town C.D."/>
        </authorList>
    </citation>
    <scope>NUCLEOTIDE SEQUENCE [LARGE SCALE MRNA]</scope>
    <source>
        <strain>cv. Columbia</strain>
    </source>
</reference>
<reference key="4">
    <citation type="journal article" date="2006" name="Plant Biotechnol. J.">
        <title>Simultaneous high-throughput recombinational cloning of open reading frames in closed and open configurations.</title>
        <authorList>
            <person name="Underwood B.A."/>
            <person name="Vanderhaeghen R."/>
            <person name="Whitford R."/>
            <person name="Town C.D."/>
            <person name="Hilson P."/>
        </authorList>
    </citation>
    <scope>NUCLEOTIDE SEQUENCE [LARGE SCALE MRNA]</scope>
    <source>
        <strain>cv. Columbia</strain>
    </source>
</reference>
<reference key="5">
    <citation type="journal article" date="2018" name="Plant Physiol.">
        <title>Coordinated regulation of hypocotyl cell elongation by light and ethylene through a microtubule destabilizing protein.</title>
        <authorList>
            <person name="Ma Q."/>
            <person name="Wang X."/>
            <person name="Sun J."/>
            <person name="Mao T."/>
        </authorList>
    </citation>
    <scope>FUNCTION</scope>
    <scope>DISRUPTION PHENOTYPE</scope>
    <scope>INDUCTION BY ETHYLENE AND LIGHT</scope>
    <scope>SUBCELLULAR LOCATION</scope>
    <source>
        <strain>cv. Columbia</strain>
    </source>
</reference>
<reference key="6">
    <citation type="journal article" date="2020" name="J. Exp. Bot.">
        <title>Submergence stress-induced hypocotyl elongation through ethylene signaling-mediated regulation of cortical microtubules in Arabidopsis.</title>
        <authorList>
            <person name="Wang X."/>
            <person name="Ma Q."/>
            <person name="Wang R."/>
            <person name="Wang P."/>
            <person name="Liu Y."/>
            <person name="Mao T."/>
        </authorList>
    </citation>
    <scope>FUNCTION</scope>
    <scope>DISRUPTION PHENOTYPE</scope>
    <scope>INDUCTION BY SUBMERGENCE AND ETHYLENE</scope>
    <source>
        <strain>cv. Columbia</strain>
        <strain>cv. En-2</strain>
        <strain>cv. Landsberg erecta</strain>
        <strain>cv. Wassilewskija</strain>
    </source>
</reference>
<comment type="function">
    <text evidence="2 3">Binds directly to microtubules (PubMed:29167353). Microtubule-destabilizing protein involved in the PIF3-dependent positive regulation of hypocotyl cell elongation via the modulation of cortical microtubules dynamic in response to light and ethylene signaling (PubMed:29167353, PubMed:31638649). Promotes submergence-induced and ethylene-dependent underwater hypocotyl elongation (PubMed:31638649).</text>
</comment>
<comment type="subcellular location">
    <subcellularLocation>
        <location evidence="2">Cytoplasm</location>
        <location evidence="2">Cytoskeleton</location>
    </subcellularLocation>
    <text evidence="2">Associated with microtubules.</text>
</comment>
<comment type="induction">
    <text evidence="2 3">Induced by ethylene (ACC) via PIF3 binding to its promoter and subsequent transcription regulation (PubMed:29167353). Accumulates upon submergence through ethylene signaling (PubMed:31638649). Repressed by aminoethoxyvinyl-Gly (AVG), an inhibitor of ethylene biosynthesis (PubMed:29167353, PubMed:31638649). Higher levels in light-grown hypocotyls (PubMed:29167353).</text>
</comment>
<comment type="disruption phenotype">
    <text evidence="2 3">Reduced hypocotyls length in light conditions and in response to ethylene due to reduced cell elongation and associated with the disruption of cortical microtubules (PubMed:29167353). Suppressed effects of submergence on hypocotyl elongation and cortical microtubule reorganization (PubMed:31638649).</text>
</comment>
<comment type="similarity">
    <text evidence="6">Belongs to the TPX2 family.</text>
</comment>
<accession>Q5XVC4</accession>
<accession>A0A178VFR0</accession>
<accession>Q9C7U3</accession>
<keyword id="KW-0963">Cytoplasm</keyword>
<keyword id="KW-0206">Cytoskeleton</keyword>
<keyword id="KW-0217">Developmental protein</keyword>
<keyword id="KW-0493">Microtubule</keyword>
<keyword id="KW-1185">Reference proteome</keyword>
<sequence>MESTNLKNAKHETLVMDPISFQSKAQEVSRFSENSNPNFVSHSTPLEKSSKSSAQKNPKWKPNPVPAVFSPRNRIRERRFVVVKKNSRKEKNDSASVDCKCGAKTISNMKKCVCIAYETLRASQEEFFNNRRESVSEIGESSQNLEDGNEQVEFGDSDETRVSLMKRRREKVLEEARMSIPEFGKVMHLVKAFEKLTCFPLSKVTSKEEEDQIKQPLKWELPGMSQPKCSESETDQFTWSSSFYPSSGLILTATNLGLEQPHASVSSSWDNSVSSLNSNGGRRGRRNSFESSASMGSRRSTKKQIKVTSLKPFKLRTEERGRMKEEEFAKKLHEMTLEKAKKRIPIAQGLPWTTDEPENLVKPHVKDITIPVDLKLHSDIRAVERAEFDYQVTEKINLVEQYKTERERQQKLAEEEEIRRLRKELVPKAQPMPYFDRPFIPKRSNKHPTVPRDPKFNIPQHKKIRCCSTSSWSDTGSYMSDLLYQQDL</sequence>